<comment type="function">
    <text evidence="1 2">Mediates influx of magnesium ions (By similarity). Alternates between open and closed states. Activated by low cytoplasmic Mg(2+) levels. Inactive when cytoplasmic Mg(2+) levels are high (By similarity).</text>
</comment>
<comment type="catalytic activity">
    <reaction evidence="1">
        <text>Mg(2+)(in) = Mg(2+)(out)</text>
        <dbReference type="Rhea" id="RHEA:29827"/>
        <dbReference type="ChEBI" id="CHEBI:18420"/>
    </reaction>
</comment>
<comment type="subunit">
    <text evidence="2">Homopentamer. In the absence of Mg(2+), interactions between subunits are weakened, and dimers, trimers and tetramers can be observed in vitro (By similarity).</text>
</comment>
<comment type="subcellular location">
    <subcellularLocation>
        <location evidence="1">Cell inner membrane</location>
        <topology evidence="2">Multi-pass membrane protein</topology>
    </subcellularLocation>
</comment>
<comment type="domain">
    <text evidence="2">The central ion permeation pathway is formed by the first transmembrane domain from each of the five subunits. Mg(2+) binding strengthens interactions between subunits and leads to the formation of a symmetrical homopentamer surrounding a closed ion permeation pathway. Low Mg(2+) concentrations trigger both a conformation change within each subunit and a loosening of the interactions between subunits. This results in an open ion conduction pathway. In addition, this results in a less symmetrical shape of the whole complex.</text>
</comment>
<comment type="similarity">
    <text evidence="4">Belongs to the CorA metal ion transporter (MIT) (TC 1.A.35) family.</text>
</comment>
<protein>
    <recommendedName>
        <fullName>Magnesium transport protein CorA</fullName>
    </recommendedName>
</protein>
<reference key="1">
    <citation type="journal article" date="2004" name="Nat. Biotechnol.">
        <title>The genome sequence of the capnophilic rumen bacterium Mannheimia succiniciproducens.</title>
        <authorList>
            <person name="Hong S.H."/>
            <person name="Kim J.S."/>
            <person name="Lee S.Y."/>
            <person name="In Y.H."/>
            <person name="Choi S.S."/>
            <person name="Rih J.-K."/>
            <person name="Kim C.H."/>
            <person name="Jeong H."/>
            <person name="Hur C.G."/>
            <person name="Kim J.J."/>
        </authorList>
    </citation>
    <scope>NUCLEOTIDE SEQUENCE [LARGE SCALE GENOMIC DNA]</scope>
    <source>
        <strain>KCTC 0769BP / MBEL55E</strain>
    </source>
</reference>
<accession>Q65VT3</accession>
<proteinExistence type="inferred from homology"/>
<sequence length="316" mass="36639">MINAFALENARLTRLDEDNLSTLNKAIWIDLVEPTSEEREILQDGLEQSLASFLELEDIEASARFFEDEDGLHLHSFFYCEDEEDYADLASVAFTIRDGRLFTLRDRDLPAFRLYRMRSRYQRLDECNAYEVLLDLFETKIEQLADVIETVYSDLERLSRVILDGKQGEAFDDALGTLTEQEDMSSKVRLCLMDTQRALSFLVRKTRLPANQLEQAREILRDIESLQPHNESLFQKVNFLMQAAMGYINIEQNRVMKFFSVVSVMFLPATLVASTYGMNFEFMPELGFKYGYPMAIGLMIAAGVTPYMYFKRKGWL</sequence>
<organism>
    <name type="scientific">Mannheimia succiniciproducens (strain KCTC 0769BP / MBEL55E)</name>
    <dbReference type="NCBI Taxonomy" id="221988"/>
    <lineage>
        <taxon>Bacteria</taxon>
        <taxon>Pseudomonadati</taxon>
        <taxon>Pseudomonadota</taxon>
        <taxon>Gammaproteobacteria</taxon>
        <taxon>Pasteurellales</taxon>
        <taxon>Pasteurellaceae</taxon>
        <taxon>Basfia</taxon>
    </lineage>
</organism>
<name>CORA_MANSM</name>
<dbReference type="EMBL" id="AE016827">
    <property type="protein sequence ID" value="AAU36927.1"/>
    <property type="molecule type" value="Genomic_DNA"/>
</dbReference>
<dbReference type="RefSeq" id="WP_011199502.1">
    <property type="nucleotide sequence ID" value="NC_006300.1"/>
</dbReference>
<dbReference type="SMR" id="Q65VT3"/>
<dbReference type="STRING" id="221988.MS0320"/>
<dbReference type="KEGG" id="msu:MS0320"/>
<dbReference type="eggNOG" id="COG0598">
    <property type="taxonomic scope" value="Bacteria"/>
</dbReference>
<dbReference type="HOGENOM" id="CLU_007127_5_0_6"/>
<dbReference type="OrthoDB" id="9803416at2"/>
<dbReference type="Proteomes" id="UP000000607">
    <property type="component" value="Chromosome"/>
</dbReference>
<dbReference type="GO" id="GO:0005886">
    <property type="term" value="C:plasma membrane"/>
    <property type="evidence" value="ECO:0007669"/>
    <property type="project" value="UniProtKB-SubCell"/>
</dbReference>
<dbReference type="GO" id="GO:0015087">
    <property type="term" value="F:cobalt ion transmembrane transporter activity"/>
    <property type="evidence" value="ECO:0007669"/>
    <property type="project" value="InterPro"/>
</dbReference>
<dbReference type="GO" id="GO:0015095">
    <property type="term" value="F:magnesium ion transmembrane transporter activity"/>
    <property type="evidence" value="ECO:0007669"/>
    <property type="project" value="InterPro"/>
</dbReference>
<dbReference type="GO" id="GO:0015099">
    <property type="term" value="F:nickel cation transmembrane transporter activity"/>
    <property type="evidence" value="ECO:0007669"/>
    <property type="project" value="TreeGrafter"/>
</dbReference>
<dbReference type="CDD" id="cd12835">
    <property type="entry name" value="EcCorA-like_1"/>
    <property type="match status" value="1"/>
</dbReference>
<dbReference type="FunFam" id="1.20.58.340:FF:000001">
    <property type="entry name" value="Magnesium transport protein CorA"/>
    <property type="match status" value="1"/>
</dbReference>
<dbReference type="Gene3D" id="3.30.460.20">
    <property type="entry name" value="CorA soluble domain-like"/>
    <property type="match status" value="1"/>
</dbReference>
<dbReference type="Gene3D" id="1.20.58.340">
    <property type="entry name" value="Magnesium transport protein CorA, transmembrane region"/>
    <property type="match status" value="1"/>
</dbReference>
<dbReference type="InterPro" id="IPR045861">
    <property type="entry name" value="CorA_cytoplasmic_dom"/>
</dbReference>
<dbReference type="InterPro" id="IPR050829">
    <property type="entry name" value="CorA_MIT"/>
</dbReference>
<dbReference type="InterPro" id="IPR045863">
    <property type="entry name" value="CorA_TM1_TM2"/>
</dbReference>
<dbReference type="InterPro" id="IPR004488">
    <property type="entry name" value="Mg/Co-transport_prot_CorA"/>
</dbReference>
<dbReference type="InterPro" id="IPR002523">
    <property type="entry name" value="MgTranspt_CorA/ZnTranspt_ZntB"/>
</dbReference>
<dbReference type="NCBIfam" id="TIGR00383">
    <property type="entry name" value="corA"/>
    <property type="match status" value="1"/>
</dbReference>
<dbReference type="PANTHER" id="PTHR47685">
    <property type="entry name" value="MAGNESIUM TRANSPORT PROTEIN CORA"/>
    <property type="match status" value="1"/>
</dbReference>
<dbReference type="PANTHER" id="PTHR47685:SF1">
    <property type="entry name" value="MAGNESIUM TRANSPORT PROTEIN CORA"/>
    <property type="match status" value="1"/>
</dbReference>
<dbReference type="Pfam" id="PF01544">
    <property type="entry name" value="CorA"/>
    <property type="match status" value="1"/>
</dbReference>
<dbReference type="SUPFAM" id="SSF143865">
    <property type="entry name" value="CorA soluble domain-like"/>
    <property type="match status" value="1"/>
</dbReference>
<dbReference type="SUPFAM" id="SSF144083">
    <property type="entry name" value="Magnesium transport protein CorA, transmembrane region"/>
    <property type="match status" value="1"/>
</dbReference>
<evidence type="ECO:0000250" key="1">
    <source>
        <dbReference type="UniProtKB" id="P0ABI4"/>
    </source>
</evidence>
<evidence type="ECO:0000250" key="2">
    <source>
        <dbReference type="UniProtKB" id="Q9WZ31"/>
    </source>
</evidence>
<evidence type="ECO:0000255" key="3"/>
<evidence type="ECO:0000305" key="4"/>
<keyword id="KW-0997">Cell inner membrane</keyword>
<keyword id="KW-1003">Cell membrane</keyword>
<keyword id="KW-0406">Ion transport</keyword>
<keyword id="KW-0460">Magnesium</keyword>
<keyword id="KW-0472">Membrane</keyword>
<keyword id="KW-0812">Transmembrane</keyword>
<keyword id="KW-1133">Transmembrane helix</keyword>
<keyword id="KW-0813">Transport</keyword>
<feature type="chain" id="PRO_0000239098" description="Magnesium transport protein CorA">
    <location>
        <begin position="1"/>
        <end position="316"/>
    </location>
</feature>
<feature type="transmembrane region" description="Helical" evidence="3">
    <location>
        <begin position="258"/>
        <end position="278"/>
    </location>
</feature>
<feature type="transmembrane region" description="Helical" evidence="3">
    <location>
        <begin position="290"/>
        <end position="310"/>
    </location>
</feature>
<feature type="short sequence motif" description="Probable selectivity filter" evidence="2">
    <location>
        <begin position="277"/>
        <end position="279"/>
    </location>
</feature>
<feature type="site" description="Essential for ion permeation" evidence="2">
    <location>
        <position position="253"/>
    </location>
</feature>
<gene>
    <name type="primary">corA</name>
    <name type="ordered locus">MS0320</name>
</gene>